<protein>
    <recommendedName>
        <fullName>Nitrogenase iron-iron protein delta chain</fullName>
        <ecNumber>1.18.6.1</ecNumber>
    </recommendedName>
    <alternativeName>
        <fullName>Dinitrogenase 3 subunit delta</fullName>
    </alternativeName>
    <alternativeName>
        <fullName>Nitrogenase component I</fullName>
    </alternativeName>
</protein>
<sequence length="116" mass="13714">MEDPSKVQLNQLTDYIMKNCLWQFHSRKWDRERQNEGILTKTKQILLGEEVDLSTPADRCYYADALCLADAYKTEYPWINDMSKDELIQLMQQLKDRIDYVTITGSLNAELTDPRY</sequence>
<feature type="chain" id="PRO_0000213566" description="Nitrogenase iron-iron protein delta chain">
    <location>
        <begin position="1"/>
        <end position="116"/>
    </location>
</feature>
<comment type="function">
    <text>The key enzymatic reactions in nitrogen fixation are catalyzed by the nitrogenase complex, which has 2 components: the iron protein (component 2) and a component 1 which is either a molybdenum-iron protein, a vanadium-iron, or an iron-iron protein.</text>
</comment>
<comment type="catalytic activity">
    <reaction>
        <text>N2 + 8 reduced [2Fe-2S]-[ferredoxin] + 16 ATP + 16 H2O = H2 + 8 oxidized [2Fe-2S]-[ferredoxin] + 2 NH4(+) + 16 ADP + 16 phosphate + 6 H(+)</text>
        <dbReference type="Rhea" id="RHEA:21448"/>
        <dbReference type="Rhea" id="RHEA-COMP:10000"/>
        <dbReference type="Rhea" id="RHEA-COMP:10001"/>
        <dbReference type="ChEBI" id="CHEBI:15377"/>
        <dbReference type="ChEBI" id="CHEBI:15378"/>
        <dbReference type="ChEBI" id="CHEBI:17997"/>
        <dbReference type="ChEBI" id="CHEBI:18276"/>
        <dbReference type="ChEBI" id="CHEBI:28938"/>
        <dbReference type="ChEBI" id="CHEBI:30616"/>
        <dbReference type="ChEBI" id="CHEBI:33737"/>
        <dbReference type="ChEBI" id="CHEBI:33738"/>
        <dbReference type="ChEBI" id="CHEBI:43474"/>
        <dbReference type="ChEBI" id="CHEBI:456216"/>
        <dbReference type="EC" id="1.18.6.1"/>
    </reaction>
</comment>
<comment type="cofactor">
    <cofactor evidence="1">
        <name>iron-sulfur cluster</name>
        <dbReference type="ChEBI" id="CHEBI:30408"/>
    </cofactor>
</comment>
<comment type="subunit">
    <text evidence="1">Hexamer of two alpha, two beta, and two delta chains.</text>
</comment>
<keyword id="KW-0067">ATP-binding</keyword>
<keyword id="KW-0408">Iron</keyword>
<keyword id="KW-0411">Iron-sulfur</keyword>
<keyword id="KW-0479">Metal-binding</keyword>
<keyword id="KW-0535">Nitrogen fixation</keyword>
<keyword id="KW-0547">Nucleotide-binding</keyword>
<keyword id="KW-0560">Oxidoreductase</keyword>
<accession>Q46244</accession>
<proteinExistence type="inferred from homology"/>
<reference key="1">
    <citation type="journal article" date="1993" name="Biochim. Biophys. Acta">
        <title>Organization of potential alternative nitrogenase genes from Clostridium pasteurianum.</title>
        <authorList>
            <person name="Zinoni F."/>
            <person name="Robson R.M."/>
            <person name="Robson R.L."/>
        </authorList>
    </citation>
    <scope>NUCLEOTIDE SEQUENCE [GENOMIC DNA]</scope>
    <source>
        <strain>ATCC 6013 / DSM 525 / NCIB 9486 / VKM B-1774 / W5</strain>
    </source>
</reference>
<organism>
    <name type="scientific">Clostridium pasteurianum</name>
    <dbReference type="NCBI Taxonomy" id="1501"/>
    <lineage>
        <taxon>Bacteria</taxon>
        <taxon>Bacillati</taxon>
        <taxon>Bacillota</taxon>
        <taxon>Clostridia</taxon>
        <taxon>Eubacteriales</taxon>
        <taxon>Clostridiaceae</taxon>
        <taxon>Clostridium</taxon>
    </lineage>
</organism>
<dbReference type="EC" id="1.18.6.1"/>
<dbReference type="EMBL" id="L09762">
    <property type="protein sequence ID" value="AAC36971.1"/>
    <property type="molecule type" value="Genomic_DNA"/>
</dbReference>
<dbReference type="PIR" id="S34611">
    <property type="entry name" value="S34611"/>
</dbReference>
<dbReference type="RefSeq" id="WP_003447705.1">
    <property type="nucleotide sequence ID" value="NZ_LFYL01000002.1"/>
</dbReference>
<dbReference type="SMR" id="Q46244"/>
<dbReference type="GeneID" id="93075903"/>
<dbReference type="OrthoDB" id="198407at2"/>
<dbReference type="GO" id="GO:0005524">
    <property type="term" value="F:ATP binding"/>
    <property type="evidence" value="ECO:0007669"/>
    <property type="project" value="UniProtKB-KW"/>
</dbReference>
<dbReference type="GO" id="GO:0005506">
    <property type="term" value="F:iron ion binding"/>
    <property type="evidence" value="ECO:0007669"/>
    <property type="project" value="InterPro"/>
</dbReference>
<dbReference type="GO" id="GO:0051536">
    <property type="term" value="F:iron-sulfur cluster binding"/>
    <property type="evidence" value="ECO:0007669"/>
    <property type="project" value="UniProtKB-KW"/>
</dbReference>
<dbReference type="GO" id="GO:0016163">
    <property type="term" value="F:nitrogenase activity"/>
    <property type="evidence" value="ECO:0007669"/>
    <property type="project" value="UniProtKB-EC"/>
</dbReference>
<dbReference type="GO" id="GO:0009399">
    <property type="term" value="P:nitrogen fixation"/>
    <property type="evidence" value="ECO:0007669"/>
    <property type="project" value="UniProtKB-KW"/>
</dbReference>
<dbReference type="InterPro" id="IPR014278">
    <property type="entry name" value="Nase_Fe-Fe_dsu"/>
</dbReference>
<dbReference type="InterPro" id="IPR004349">
    <property type="entry name" value="V/Nase_d_su"/>
</dbReference>
<dbReference type="NCBIfam" id="TIGR02929">
    <property type="entry name" value="anfG_nitrog"/>
    <property type="match status" value="1"/>
</dbReference>
<dbReference type="Pfam" id="PF03139">
    <property type="entry name" value="AnfG_VnfG"/>
    <property type="match status" value="1"/>
</dbReference>
<gene>
    <name type="primary">anfG</name>
</gene>
<evidence type="ECO:0000250" key="1"/>
<name>ANFG_CLOPA</name>